<name>VP2_ROTPC</name>
<dbReference type="EMBL" id="M74217">
    <property type="protein sequence ID" value="AAA19561.1"/>
    <property type="molecule type" value="Unassigned_DNA"/>
</dbReference>
<dbReference type="PIR" id="B40822">
    <property type="entry name" value="P2XRCW"/>
</dbReference>
<dbReference type="SMR" id="P26191"/>
<dbReference type="Proteomes" id="UP000008175">
    <property type="component" value="Genome"/>
</dbReference>
<dbReference type="GO" id="GO:0039616">
    <property type="term" value="C:T=2 icosahedral viral capsid"/>
    <property type="evidence" value="ECO:0007669"/>
    <property type="project" value="UniProtKB-UniRule"/>
</dbReference>
<dbReference type="GO" id="GO:0039625">
    <property type="term" value="C:viral inner capsid"/>
    <property type="evidence" value="ECO:0007669"/>
    <property type="project" value="UniProtKB-UniRule"/>
</dbReference>
<dbReference type="GO" id="GO:0019013">
    <property type="term" value="C:viral nucleocapsid"/>
    <property type="evidence" value="ECO:0007669"/>
    <property type="project" value="UniProtKB-UniRule"/>
</dbReference>
<dbReference type="GO" id="GO:0003723">
    <property type="term" value="F:RNA binding"/>
    <property type="evidence" value="ECO:0007669"/>
    <property type="project" value="UniProtKB-UniRule"/>
</dbReference>
<dbReference type="HAMAP" id="MF_04123">
    <property type="entry name" value="Rota_VP2"/>
    <property type="match status" value="1"/>
</dbReference>
<dbReference type="InterPro" id="IPR007779">
    <property type="entry name" value="Rotavirus_VP2"/>
</dbReference>
<dbReference type="Pfam" id="PF05087">
    <property type="entry name" value="Rota_VP2"/>
    <property type="match status" value="1"/>
</dbReference>
<keyword id="KW-0167">Capsid protein</keyword>
<keyword id="KW-1153">Inner capsid protein</keyword>
<keyword id="KW-0694">RNA-binding</keyword>
<keyword id="KW-1141">T=2 icosahedral capsid protein</keyword>
<keyword id="KW-0946">Virion</keyword>
<sequence>MISRNRRRNTQQKDAEKEKQTENVEEKEIKEAKEQVKDEKQVITEENVDSPKDVKEQSNTVNLQKNDLVKEVINIQNQTLNTIVAENKVEIEEVVKKYIPSYSTDKLIVKNYRNSRIKCQTYNKLFRLLHVKSYLYDVNGEKKLSTRWYWKLLKDDLPAGDYSVRQFFLSLYLNVLDEMPDYVMLRDMAVDNPYSAEAGKIVDEKSKEILVEIYQDQMTEGYIRRYMSDLRHRISGETNTAKYPAILHPVDEELNKYFLEHQLIQPLTTRNIAELIPTQLYHDPNYVFNIDAAFLTNSRFVPPYLTQDRIGLHDGFESIWDAKTHADYVSARRFVPDLTELVDAEKQMKEMLQCKLNHNSWQELVHGRNEAFKFIIGTVLSTRTIAVEFITSNYMSLASCMYLMTIMPSEIFLRESLVAMQLAVINTLIYPALGLAQMHYQAGEIRRLELAEMQVANRPIRQWLHHCNTLQFGRQVTEGVTHLRFTNDIMTGRIVNLFSTMLVALSSQPFATYPLDYKRSVQRALQLLSNRTAQIADLTRLIVYNYTTLSACIVMNMHLVGTLTVERIQATALTSLIMLISNKTVIPEPSSLFSYFSSNINFLTNYNEQIDNVVAEIMAAYRLDLYQQKMLMLVTRFVSRLYIFDAPKIPPDQMYRLRNRLRNIPVERRRADVFRIIMNNRDLIEKTSERICQGVLLSYSPMPLTYVEDVGLTNVVNDTNGFQIINIEEIEKTGDYSAITNALLRDTPIILKGAIPYVTNSSVIDVLSKIDTTVFASIVKDRDISKLKPIKFTINSDSSEYYLVHNNKWTPTTTTAVYKARSQQFNIQHSVSMLESNLFFVVYNDLFKYIKTTTVLPINAVSYDGARIMQET</sequence>
<reference key="1">
    <citation type="journal article" date="1992" name="Virology">
        <title>Sequences of the four larger proteins of a porcine group C rotavirus and comparison with the equivalent group A rotavirus proteins.</title>
        <authorList>
            <person name="Bremont M."/>
            <person name="Juste-Lesage P."/>
            <person name="Chabanne-Vautherot D."/>
            <person name="Charpilienne A."/>
            <person name="Cohen J."/>
        </authorList>
    </citation>
    <scope>NUCLEOTIDE SEQUENCE [GENOMIC RNA]</scope>
</reference>
<proteinExistence type="inferred from homology"/>
<accession>P26191</accession>
<comment type="function">
    <text evidence="1">Inner capsid protein that self-assembles to form an icosahedral capsid with a T=2 symmetry, which consists of 120 copies of VP2, with channels at each of its five-fold vertices. This capsid constitutes the innermost concentric layer of the viral mature particle. It encapsidates the polymerase VP1, the capping enzyme VP3 and the genomic dsRNA, thereby defining the core. The innermost VP2 capsid and the intermediate VP6 capsid remain intact following cell entry to protect the dsRNA from degradation and to prevent unfavorable antiviral responses in the host cell during all the replication cycle of the virus. Nascent transcripts are transcribed within the structural confines of this double-layered particle (DLP) and are extruded through the channels formed by VP2 N-termini. VP2 is required for the replicase activity of VP1 polymerase. Probably recruits a copy of a VP1-VP3 complex, potentially along with a segment of plus-strand RNA, as a decamer of VP2 assembles. May activate the autoinhibited VP1/RNA complex to coordinate packaging and genome replication.</text>
</comment>
<comment type="subunit">
    <text evidence="1">Homodecamer; each decamer is made up of two conformers of VP2, called VP2A and VP2B. Interacts with a VP1-VP3 complex. Interacts with the intermediate capsid protein VP6. Interacts with NSP5. Interacts (via N-terminus) with NSP2.</text>
</comment>
<comment type="subcellular location">
    <subcellularLocation>
        <location evidence="1">Virion</location>
    </subcellularLocation>
    <text evidence="1">Inner capsid protein. Also found in spherical cytoplasmic structures, called virus factories, that appear early after infection and are the site of viral replication and packaging.</text>
</comment>
<comment type="similarity">
    <text evidence="1">Belongs to the rotavirus VP2 family.</text>
</comment>
<evidence type="ECO:0000255" key="1">
    <source>
        <dbReference type="HAMAP-Rule" id="MF_04123"/>
    </source>
</evidence>
<evidence type="ECO:0000256" key="2">
    <source>
        <dbReference type="SAM" id="MobiDB-lite"/>
    </source>
</evidence>
<protein>
    <recommendedName>
        <fullName evidence="1">Inner capsid protein VP2</fullName>
    </recommendedName>
</protein>
<organism>
    <name type="scientific">Rotavirus C (strain RVC/Pig/United States/Cowden/1980)</name>
    <name type="common">RV-C</name>
    <dbReference type="NCBI Taxonomy" id="10916"/>
    <lineage>
        <taxon>Viruses</taxon>
        <taxon>Riboviria</taxon>
        <taxon>Orthornavirae</taxon>
        <taxon>Duplornaviricota</taxon>
        <taxon>Resentoviricetes</taxon>
        <taxon>Reovirales</taxon>
        <taxon>Sedoreoviridae</taxon>
        <taxon>Rotavirus</taxon>
        <taxon>Rotavirus C</taxon>
    </lineage>
</organism>
<organismHost>
    <name type="scientific">Sus scrofa</name>
    <name type="common">Pig</name>
    <dbReference type="NCBI Taxonomy" id="9823"/>
</organismHost>
<feature type="chain" id="PRO_0000149534" description="Inner capsid protein VP2">
    <location>
        <begin position="1"/>
        <end position="872"/>
    </location>
</feature>
<feature type="region of interest" description="Disordered" evidence="2">
    <location>
        <begin position="1"/>
        <end position="57"/>
    </location>
</feature>
<feature type="compositionally biased region" description="Basic residues" evidence="2">
    <location>
        <begin position="1"/>
        <end position="10"/>
    </location>
</feature>
<feature type="compositionally biased region" description="Basic and acidic residues" evidence="2">
    <location>
        <begin position="11"/>
        <end position="56"/>
    </location>
</feature>